<dbReference type="EC" id="6.3.4.5"/>
<dbReference type="EMBL" id="M35236">
    <property type="protein sequence ID" value="AAA23482.1"/>
    <property type="molecule type" value="Genomic_DNA"/>
</dbReference>
<dbReference type="EMBL" id="U18997">
    <property type="protein sequence ID" value="AAA57974.1"/>
    <property type="molecule type" value="Genomic_DNA"/>
</dbReference>
<dbReference type="EMBL" id="U00096">
    <property type="protein sequence ID" value="AAC76205.1"/>
    <property type="molecule type" value="Genomic_DNA"/>
</dbReference>
<dbReference type="EMBL" id="AP009048">
    <property type="protein sequence ID" value="BAE77217.1"/>
    <property type="molecule type" value="Genomic_DNA"/>
</dbReference>
<dbReference type="PIR" id="G65107">
    <property type="entry name" value="AJECRS"/>
</dbReference>
<dbReference type="RefSeq" id="NP_417640.1">
    <property type="nucleotide sequence ID" value="NC_000913.3"/>
</dbReference>
<dbReference type="RefSeq" id="WP_000207680.1">
    <property type="nucleotide sequence ID" value="NZ_SSZK01000007.1"/>
</dbReference>
<dbReference type="PDB" id="1K92">
    <property type="method" value="X-ray"/>
    <property type="resolution" value="1.60 A"/>
    <property type="chains" value="A=2-447"/>
</dbReference>
<dbReference type="PDB" id="1K97">
    <property type="method" value="X-ray"/>
    <property type="resolution" value="2.00 A"/>
    <property type="chains" value="A=2-447"/>
</dbReference>
<dbReference type="PDB" id="1KP2">
    <property type="method" value="X-ray"/>
    <property type="resolution" value="2.00 A"/>
    <property type="chains" value="A=2-447"/>
</dbReference>
<dbReference type="PDB" id="1KP3">
    <property type="method" value="X-ray"/>
    <property type="resolution" value="2.00 A"/>
    <property type="chains" value="A=2-447"/>
</dbReference>
<dbReference type="PDBsum" id="1K92"/>
<dbReference type="PDBsum" id="1K97"/>
<dbReference type="PDBsum" id="1KP2"/>
<dbReference type="PDBsum" id="1KP3"/>
<dbReference type="SMR" id="P0A6E4"/>
<dbReference type="BioGRID" id="4263121">
    <property type="interactions" value="51"/>
</dbReference>
<dbReference type="BioGRID" id="851906">
    <property type="interactions" value="1"/>
</dbReference>
<dbReference type="DIP" id="DIP-35842N"/>
<dbReference type="FunCoup" id="P0A6E4">
    <property type="interactions" value="766"/>
</dbReference>
<dbReference type="IntAct" id="P0A6E4">
    <property type="interactions" value="14"/>
</dbReference>
<dbReference type="STRING" id="511145.b3172"/>
<dbReference type="jPOST" id="P0A6E4"/>
<dbReference type="PaxDb" id="511145-b3172"/>
<dbReference type="EnsemblBacteria" id="AAC76205">
    <property type="protein sequence ID" value="AAC76205"/>
    <property type="gene ID" value="b3172"/>
</dbReference>
<dbReference type="GeneID" id="947590"/>
<dbReference type="KEGG" id="ecj:JW3140"/>
<dbReference type="KEGG" id="eco:b3172"/>
<dbReference type="KEGG" id="ecoc:C3026_17275"/>
<dbReference type="PATRIC" id="fig|1411691.4.peg.3559"/>
<dbReference type="EchoBASE" id="EB0066"/>
<dbReference type="eggNOG" id="COG0137">
    <property type="taxonomic scope" value="Bacteria"/>
</dbReference>
<dbReference type="HOGENOM" id="CLU_032784_4_1_6"/>
<dbReference type="InParanoid" id="P0A6E4"/>
<dbReference type="OMA" id="WRWTVSP"/>
<dbReference type="OrthoDB" id="9801641at2"/>
<dbReference type="PhylomeDB" id="P0A6E4"/>
<dbReference type="BioCyc" id="EcoCyc:ARGSUCCINSYN-MONOMER"/>
<dbReference type="UniPathway" id="UPA00068">
    <property type="reaction ID" value="UER00113"/>
</dbReference>
<dbReference type="EvolutionaryTrace" id="P0A6E4"/>
<dbReference type="PRO" id="PR:P0A6E4"/>
<dbReference type="Proteomes" id="UP000000625">
    <property type="component" value="Chromosome"/>
</dbReference>
<dbReference type="GO" id="GO:0005737">
    <property type="term" value="C:cytoplasm"/>
    <property type="evidence" value="ECO:0000318"/>
    <property type="project" value="GO_Central"/>
</dbReference>
<dbReference type="GO" id="GO:0005829">
    <property type="term" value="C:cytosol"/>
    <property type="evidence" value="ECO:0000314"/>
    <property type="project" value="EcoCyc"/>
</dbReference>
<dbReference type="GO" id="GO:0004055">
    <property type="term" value="F:argininosuccinate synthase activity"/>
    <property type="evidence" value="ECO:0000250"/>
    <property type="project" value="EcoCyc"/>
</dbReference>
<dbReference type="GO" id="GO:0005524">
    <property type="term" value="F:ATP binding"/>
    <property type="evidence" value="ECO:0007669"/>
    <property type="project" value="UniProtKB-UniRule"/>
</dbReference>
<dbReference type="GO" id="GO:0042802">
    <property type="term" value="F:identical protein binding"/>
    <property type="evidence" value="ECO:0000353"/>
    <property type="project" value="IntAct"/>
</dbReference>
<dbReference type="GO" id="GO:0042803">
    <property type="term" value="F:protein homodimerization activity"/>
    <property type="evidence" value="ECO:0007669"/>
    <property type="project" value="InterPro"/>
</dbReference>
<dbReference type="GO" id="GO:0000053">
    <property type="term" value="P:argininosuccinate metabolic process"/>
    <property type="evidence" value="ECO:0000318"/>
    <property type="project" value="GO_Central"/>
</dbReference>
<dbReference type="GO" id="GO:0006526">
    <property type="term" value="P:L-arginine biosynthetic process"/>
    <property type="evidence" value="ECO:0000318"/>
    <property type="project" value="GO_Central"/>
</dbReference>
<dbReference type="GO" id="GO:0000050">
    <property type="term" value="P:urea cycle"/>
    <property type="evidence" value="ECO:0000318"/>
    <property type="project" value="GO_Central"/>
</dbReference>
<dbReference type="CDD" id="cd01999">
    <property type="entry name" value="ASS"/>
    <property type="match status" value="1"/>
</dbReference>
<dbReference type="FunFam" id="1.10.287.400:FF:000001">
    <property type="entry name" value="Argininosuccinate synthase"/>
    <property type="match status" value="1"/>
</dbReference>
<dbReference type="Gene3D" id="1.10.287.400">
    <property type="match status" value="1"/>
</dbReference>
<dbReference type="Gene3D" id="3.90.1260.10">
    <property type="entry name" value="Argininosuccinate synthetase, chain A, domain 2"/>
    <property type="match status" value="1"/>
</dbReference>
<dbReference type="Gene3D" id="3.40.50.620">
    <property type="entry name" value="HUPs"/>
    <property type="match status" value="1"/>
</dbReference>
<dbReference type="HAMAP" id="MF_00581">
    <property type="entry name" value="Arg_succ_synth_type2"/>
    <property type="match status" value="1"/>
</dbReference>
<dbReference type="InterPro" id="IPR023437">
    <property type="entry name" value="Arg_succ_synth_type2_subfam"/>
</dbReference>
<dbReference type="InterPro" id="IPR048268">
    <property type="entry name" value="Arginosuc_syn_C"/>
</dbReference>
<dbReference type="InterPro" id="IPR048267">
    <property type="entry name" value="Arginosuc_syn_N"/>
</dbReference>
<dbReference type="InterPro" id="IPR001518">
    <property type="entry name" value="Arginosuc_synth"/>
</dbReference>
<dbReference type="InterPro" id="IPR018223">
    <property type="entry name" value="Arginosuc_synth_CS"/>
</dbReference>
<dbReference type="InterPro" id="IPR023434">
    <property type="entry name" value="Arginosuc_synth_type_1_subfam"/>
</dbReference>
<dbReference type="InterPro" id="IPR024074">
    <property type="entry name" value="AS_cat/multimer_dom_body"/>
</dbReference>
<dbReference type="InterPro" id="IPR024073">
    <property type="entry name" value="AS_multimer_C_tail"/>
</dbReference>
<dbReference type="InterPro" id="IPR014729">
    <property type="entry name" value="Rossmann-like_a/b/a_fold"/>
</dbReference>
<dbReference type="NCBIfam" id="TIGR00032">
    <property type="entry name" value="argG"/>
    <property type="match status" value="1"/>
</dbReference>
<dbReference type="NCBIfam" id="NF003779">
    <property type="entry name" value="PRK05370.1"/>
    <property type="match status" value="1"/>
</dbReference>
<dbReference type="PANTHER" id="PTHR11587">
    <property type="entry name" value="ARGININOSUCCINATE SYNTHASE"/>
    <property type="match status" value="1"/>
</dbReference>
<dbReference type="PANTHER" id="PTHR11587:SF2">
    <property type="entry name" value="ARGININOSUCCINATE SYNTHASE"/>
    <property type="match status" value="1"/>
</dbReference>
<dbReference type="Pfam" id="PF20979">
    <property type="entry name" value="Arginosuc_syn_C"/>
    <property type="match status" value="1"/>
</dbReference>
<dbReference type="Pfam" id="PF00764">
    <property type="entry name" value="Arginosuc_synth"/>
    <property type="match status" value="1"/>
</dbReference>
<dbReference type="SUPFAM" id="SSF52402">
    <property type="entry name" value="Adenine nucleotide alpha hydrolases-like"/>
    <property type="match status" value="1"/>
</dbReference>
<dbReference type="SUPFAM" id="SSF69864">
    <property type="entry name" value="Argininosuccinate synthetase, C-terminal domain"/>
    <property type="match status" value="1"/>
</dbReference>
<dbReference type="PROSITE" id="PS00564">
    <property type="entry name" value="ARGININOSUCCIN_SYN_1"/>
    <property type="match status" value="1"/>
</dbReference>
<dbReference type="PROSITE" id="PS00565">
    <property type="entry name" value="ARGININOSUCCIN_SYN_2"/>
    <property type="match status" value="1"/>
</dbReference>
<protein>
    <recommendedName>
        <fullName>Argininosuccinate synthase</fullName>
        <ecNumber>6.3.4.5</ecNumber>
    </recommendedName>
    <alternativeName>
        <fullName>Citrulline--aspartate ligase</fullName>
    </alternativeName>
</protein>
<accession>P0A6E4</accession>
<accession>P22767</accession>
<accession>Q2M939</accession>
<keyword id="KW-0002">3D-structure</keyword>
<keyword id="KW-0028">Amino-acid biosynthesis</keyword>
<keyword id="KW-0055">Arginine biosynthesis</keyword>
<keyword id="KW-0067">ATP-binding</keyword>
<keyword id="KW-0963">Cytoplasm</keyword>
<keyword id="KW-0903">Direct protein sequencing</keyword>
<keyword id="KW-0436">Ligase</keyword>
<keyword id="KW-0547">Nucleotide-binding</keyword>
<keyword id="KW-1185">Reference proteome</keyword>
<gene>
    <name type="primary">argG</name>
    <name type="ordered locus">b3172</name>
    <name type="ordered locus">JW3140</name>
</gene>
<comment type="catalytic activity">
    <reaction>
        <text>L-citrulline + L-aspartate + ATP = 2-(N(omega)-L-arginino)succinate + AMP + diphosphate + H(+)</text>
        <dbReference type="Rhea" id="RHEA:10932"/>
        <dbReference type="ChEBI" id="CHEBI:15378"/>
        <dbReference type="ChEBI" id="CHEBI:29991"/>
        <dbReference type="ChEBI" id="CHEBI:30616"/>
        <dbReference type="ChEBI" id="CHEBI:33019"/>
        <dbReference type="ChEBI" id="CHEBI:57472"/>
        <dbReference type="ChEBI" id="CHEBI:57743"/>
        <dbReference type="ChEBI" id="CHEBI:456215"/>
        <dbReference type="EC" id="6.3.4.5"/>
    </reaction>
</comment>
<comment type="pathway">
    <text>Amino-acid biosynthesis; L-arginine biosynthesis; L-arginine from L-ornithine and carbamoyl phosphate: step 2/3.</text>
</comment>
<comment type="subunit">
    <text evidence="1 2">Homotetramer.</text>
</comment>
<comment type="interaction">
    <interactant intactId="EBI-1120296">
        <id>P0A6E4</id>
    </interactant>
    <interactant intactId="EBI-1120296">
        <id>P0A6E4</id>
        <label>argG</label>
    </interactant>
    <organismsDiffer>false</organismsDiffer>
    <experiments>2</experiments>
</comment>
<comment type="interaction">
    <interactant intactId="EBI-1120296">
        <id>P0A6E4</id>
    </interactant>
    <interactant intactId="EBI-1131834">
        <id>P24228</id>
        <label>dacB</label>
    </interactant>
    <organismsDiffer>false</organismsDiffer>
    <experiments>2</experiments>
</comment>
<comment type="subcellular location">
    <subcellularLocation>
        <location evidence="5">Cytoplasm</location>
    </subcellularLocation>
</comment>
<comment type="domain">
    <text>The monomer is composed of two major structural domains: a nucleotide-binding domain and a catalytic/multimerization domain. Binding of ATP results in a large rigid body conformational change of the nucleotide binding domain.</text>
</comment>
<comment type="similarity">
    <text evidence="5">Belongs to the argininosuccinate synthase family. Type 2 subfamily.</text>
</comment>
<evidence type="ECO:0000269" key="1">
    <source>
    </source>
</evidence>
<evidence type="ECO:0000269" key="2">
    <source>
    </source>
</evidence>
<evidence type="ECO:0000269" key="3">
    <source>
    </source>
</evidence>
<evidence type="ECO:0000269" key="4">
    <source>
    </source>
</evidence>
<evidence type="ECO:0000305" key="5"/>
<evidence type="ECO:0007829" key="6">
    <source>
        <dbReference type="PDB" id="1K92"/>
    </source>
</evidence>
<evidence type="ECO:0007829" key="7">
    <source>
        <dbReference type="PDB" id="1KP2"/>
    </source>
</evidence>
<sequence>MTTILKHLPVGQRIGIAFSGGLDTSAALLWMRQKGAVPYAYTANLGQPDEEDYDAIPRRAMEYGAENARLIDCRKQLVAEGIAAIQCGAFHNTTGGLTYFNTTPLGRAVTGTMLVAAMKEDGVNIWGDGSTYKGNDIERFYRYGLLTNAELQIYKPWLDTDFIDELGGRHEMSEFMIACGFDYKMSVEKAYSTDSNMLGATHEAKDLEYLNSSVKIVNPIMGVKFWDESVKIPAEEVTVRFEQGHPVALNGKTFSDDVEMMLEANRIGGRHGLGMSDQIENRIIEAKSRGIYEAPGMALLHIAYERLLTGIHNEDTIEQYHAHGRQLGRLLYQGRWFDSQALMLRDSLQRWVASQITGEVTLELRRGNDYSILNTVSENLTYKPERLTMEKGDSVFSPDDRIGQLTMRNLDITDTREKLFGYAKTGLLSSSAASGVPQVENLENKGQ</sequence>
<reference key="1">
    <citation type="journal article" date="1990" name="Gene">
        <title>Sequences of the genes encoding argininosuccinate synthetase in Escherichia coli and Saccharomyces cerevisiae: comparison with methanogenic archaebacteria and mammals.</title>
        <authorList>
            <person name="van Vliet F."/>
            <person name="Crabeel M."/>
            <person name="Boyen A."/>
            <person name="Tricot C."/>
            <person name="Stalon V."/>
            <person name="Falmagne P."/>
            <person name="Nakamura Y."/>
            <person name="Baumberg S."/>
            <person name="Glansdorff N."/>
        </authorList>
    </citation>
    <scope>NUCLEOTIDE SEQUENCE [GENOMIC DNA]</scope>
    <scope>PROTEIN SEQUENCE OF 2-11</scope>
    <source>
        <strain>K12</strain>
    </source>
</reference>
<reference key="2">
    <citation type="journal article" date="1997" name="Science">
        <title>The complete genome sequence of Escherichia coli K-12.</title>
        <authorList>
            <person name="Blattner F.R."/>
            <person name="Plunkett G. III"/>
            <person name="Bloch C.A."/>
            <person name="Perna N.T."/>
            <person name="Burland V."/>
            <person name="Riley M."/>
            <person name="Collado-Vides J."/>
            <person name="Glasner J.D."/>
            <person name="Rode C.K."/>
            <person name="Mayhew G.F."/>
            <person name="Gregor J."/>
            <person name="Davis N.W."/>
            <person name="Kirkpatrick H.A."/>
            <person name="Goeden M.A."/>
            <person name="Rose D.J."/>
            <person name="Mau B."/>
            <person name="Shao Y."/>
        </authorList>
    </citation>
    <scope>NUCLEOTIDE SEQUENCE [LARGE SCALE GENOMIC DNA]</scope>
    <source>
        <strain>K12 / MG1655 / ATCC 47076</strain>
    </source>
</reference>
<reference key="3">
    <citation type="journal article" date="2006" name="Mol. Syst. Biol.">
        <title>Highly accurate genome sequences of Escherichia coli K-12 strains MG1655 and W3110.</title>
        <authorList>
            <person name="Hayashi K."/>
            <person name="Morooka N."/>
            <person name="Yamamoto Y."/>
            <person name="Fujita K."/>
            <person name="Isono K."/>
            <person name="Choi S."/>
            <person name="Ohtsubo E."/>
            <person name="Baba T."/>
            <person name="Wanner B.L."/>
            <person name="Mori H."/>
            <person name="Horiuchi T."/>
        </authorList>
    </citation>
    <scope>NUCLEOTIDE SEQUENCE [LARGE SCALE GENOMIC DNA]</scope>
    <source>
        <strain>K12 / W3110 / ATCC 27325 / DSM 5911</strain>
    </source>
</reference>
<reference key="4">
    <citation type="journal article" date="1997" name="Electrophoresis">
        <title>Comparing the predicted and observed properties of proteins encoded in the genome of Escherichia coli K-12.</title>
        <authorList>
            <person name="Link A.J."/>
            <person name="Robison K."/>
            <person name="Church G.M."/>
        </authorList>
    </citation>
    <scope>PROTEIN SEQUENCE OF 2-13</scope>
    <source>
        <strain>K12 / EMG2</strain>
    </source>
</reference>
<reference key="5">
    <citation type="journal article" date="1999" name="Acta Crystallogr. D">
        <title>Expression, purification, crystallization and preliminary X-ray analysis of Escherichia coli argininosuccinate synthetase.</title>
        <authorList>
            <person name="Lemke C."/>
            <person name="Yeung M."/>
            <person name="Howell P.L."/>
        </authorList>
    </citation>
    <scope>CHARACTERIZATION</scope>
    <scope>CRYSTALLIZATION</scope>
</reference>
<reference key="6">
    <citation type="journal article" date="2001" name="Structure">
        <title>The 1.6 A crystal structure of E. coli argininosuccinate synthetase suggests a conformational change during catalysis.</title>
        <authorList>
            <person name="Lemke C.T."/>
            <person name="Howell P.L."/>
        </authorList>
    </citation>
    <scope>X-RAY CRYSTALLOGRAPHY (1.6 ANGSTROMS) UNCOMPLEXED AND IN COMPLEX WITH ASPARTATE AND CITRULLINE</scope>
</reference>
<reference key="7">
    <citation type="journal article" date="2002" name="J. Biol. Chem.">
        <title>Substrate induced conformational changes in argininosuccinate synthetase.</title>
        <authorList>
            <person name="Lemke C.T."/>
            <person name="Howell P.L."/>
        </authorList>
    </citation>
    <scope>X-RAY CRYSTALLOGRAPHY (2.0 ANGSTROMS) IN COMPLEX WITH ATP AND CITRULLINE</scope>
</reference>
<organism>
    <name type="scientific">Escherichia coli (strain K12)</name>
    <dbReference type="NCBI Taxonomy" id="83333"/>
    <lineage>
        <taxon>Bacteria</taxon>
        <taxon>Pseudomonadati</taxon>
        <taxon>Pseudomonadota</taxon>
        <taxon>Gammaproteobacteria</taxon>
        <taxon>Enterobacterales</taxon>
        <taxon>Enterobacteriaceae</taxon>
        <taxon>Escherichia</taxon>
    </lineage>
</organism>
<feature type="initiator methionine" description="Removed" evidence="3 4">
    <location>
        <position position="1"/>
    </location>
</feature>
<feature type="chain" id="PRO_0000148695" description="Argininosuccinate synthase">
    <location>
        <begin position="2"/>
        <end position="447"/>
    </location>
</feature>
<feature type="binding site" evidence="2">
    <location>
        <begin position="17"/>
        <end position="25"/>
    </location>
    <ligand>
        <name>ATP</name>
        <dbReference type="ChEBI" id="CHEBI:30616"/>
    </ligand>
</feature>
<feature type="binding site" evidence="2">
    <location>
        <position position="43"/>
    </location>
    <ligand>
        <name>ATP</name>
        <dbReference type="ChEBI" id="CHEBI:30616"/>
    </ligand>
</feature>
<feature type="binding site" evidence="1 2">
    <location>
        <position position="99"/>
    </location>
    <ligand>
        <name>L-citrulline</name>
        <dbReference type="ChEBI" id="CHEBI:57743"/>
    </ligand>
</feature>
<feature type="binding site" evidence="2">
    <location>
        <position position="129"/>
    </location>
    <ligand>
        <name>ATP</name>
        <dbReference type="ChEBI" id="CHEBI:30616"/>
    </ligand>
</feature>
<feature type="binding site" evidence="2">
    <location>
        <position position="131"/>
    </location>
    <ligand>
        <name>ATP</name>
        <dbReference type="ChEBI" id="CHEBI:30616"/>
    </ligand>
</feature>
<feature type="binding site" evidence="1">
    <location>
        <position position="131"/>
    </location>
    <ligand>
        <name>L-aspartate</name>
        <dbReference type="ChEBI" id="CHEBI:29991"/>
    </ligand>
</feature>
<feature type="binding site" evidence="1">
    <location>
        <position position="135"/>
    </location>
    <ligand>
        <name>L-aspartate</name>
        <dbReference type="ChEBI" id="CHEBI:29991"/>
    </ligand>
</feature>
<feature type="binding site" evidence="1 2">
    <location>
        <position position="135"/>
    </location>
    <ligand>
        <name>L-citrulline</name>
        <dbReference type="ChEBI" id="CHEBI:57743"/>
    </ligand>
</feature>
<feature type="binding site" evidence="2">
    <location>
        <position position="136"/>
    </location>
    <ligand>
        <name>ATP</name>
        <dbReference type="ChEBI" id="CHEBI:30616"/>
    </ligand>
</feature>
<feature type="binding site" evidence="1">
    <location>
        <position position="136"/>
    </location>
    <ligand>
        <name>L-aspartate</name>
        <dbReference type="ChEBI" id="CHEBI:29991"/>
    </ligand>
</feature>
<feature type="binding site" evidence="1 2">
    <location>
        <position position="139"/>
    </location>
    <ligand>
        <name>L-citrulline</name>
        <dbReference type="ChEBI" id="CHEBI:57743"/>
    </ligand>
</feature>
<feature type="binding site" evidence="1 2">
    <location>
        <position position="192"/>
    </location>
    <ligand>
        <name>L-citrulline</name>
        <dbReference type="ChEBI" id="CHEBI:57743"/>
    </ligand>
</feature>
<feature type="binding site" evidence="2">
    <location>
        <position position="194"/>
    </location>
    <ligand>
        <name>ATP</name>
        <dbReference type="ChEBI" id="CHEBI:30616"/>
    </ligand>
</feature>
<feature type="binding site" evidence="1 2">
    <location>
        <position position="201"/>
    </location>
    <ligand>
        <name>L-citrulline</name>
        <dbReference type="ChEBI" id="CHEBI:57743"/>
    </ligand>
</feature>
<feature type="binding site" evidence="1 2">
    <location>
        <position position="203"/>
    </location>
    <ligand>
        <name>L-citrulline</name>
        <dbReference type="ChEBI" id="CHEBI:57743"/>
    </ligand>
</feature>
<feature type="binding site" evidence="1 2">
    <location>
        <position position="280"/>
    </location>
    <ligand>
        <name>L-citrulline</name>
        <dbReference type="ChEBI" id="CHEBI:57743"/>
    </ligand>
</feature>
<feature type="sequence conflict" description="In Ref. 1; AAA23482." evidence="5" ref="1">
    <original>I</original>
    <variation>N</variation>
    <location>
        <position position="220"/>
    </location>
</feature>
<feature type="sequence conflict" description="In Ref. 1; AAA23482." evidence="5" ref="1">
    <original>G</original>
    <variation>D</variation>
    <location>
        <position position="328"/>
    </location>
</feature>
<feature type="strand" evidence="7">
    <location>
        <begin position="4"/>
        <end position="7"/>
    </location>
</feature>
<feature type="strand" evidence="6">
    <location>
        <begin position="12"/>
        <end position="17"/>
    </location>
</feature>
<feature type="helix" evidence="6">
    <location>
        <begin position="22"/>
        <end position="33"/>
    </location>
</feature>
<feature type="strand" evidence="6">
    <location>
        <begin position="37"/>
        <end position="44"/>
    </location>
</feature>
<feature type="helix" evidence="6">
    <location>
        <begin position="55"/>
        <end position="63"/>
    </location>
</feature>
<feature type="strand" evidence="6">
    <location>
        <begin position="66"/>
        <end position="72"/>
    </location>
</feature>
<feature type="helix" evidence="6">
    <location>
        <begin position="74"/>
        <end position="87"/>
    </location>
</feature>
<feature type="helix" evidence="6">
    <location>
        <begin position="102"/>
        <end position="120"/>
    </location>
</feature>
<feature type="strand" evidence="6">
    <location>
        <begin position="125"/>
        <end position="127"/>
    </location>
</feature>
<feature type="helix" evidence="6">
    <location>
        <begin position="136"/>
        <end position="147"/>
    </location>
</feature>
<feature type="strand" evidence="6">
    <location>
        <begin position="152"/>
        <end position="154"/>
    </location>
</feature>
<feature type="helix" evidence="6">
    <location>
        <begin position="156"/>
        <end position="158"/>
    </location>
</feature>
<feature type="helix" evidence="6">
    <location>
        <begin position="160"/>
        <end position="165"/>
    </location>
</feature>
<feature type="strand" evidence="6">
    <location>
        <begin position="166"/>
        <end position="168"/>
    </location>
</feature>
<feature type="helix" evidence="6">
    <location>
        <begin position="169"/>
        <end position="178"/>
    </location>
</feature>
<feature type="strand" evidence="6">
    <location>
        <begin position="190"/>
        <end position="196"/>
    </location>
</feature>
<feature type="strand" evidence="6">
    <location>
        <begin position="199"/>
        <end position="204"/>
    </location>
</feature>
<feature type="helix" evidence="6">
    <location>
        <begin position="205"/>
        <end position="208"/>
    </location>
</feature>
<feature type="helix" evidence="6">
    <location>
        <begin position="214"/>
        <end position="216"/>
    </location>
</feature>
<feature type="strand" evidence="6">
    <location>
        <begin position="220"/>
        <end position="222"/>
    </location>
</feature>
<feature type="strand" evidence="6">
    <location>
        <begin position="235"/>
        <end position="242"/>
    </location>
</feature>
<feature type="strand" evidence="6">
    <location>
        <begin position="245"/>
        <end position="249"/>
    </location>
</feature>
<feature type="helix" evidence="6">
    <location>
        <begin position="257"/>
        <end position="269"/>
    </location>
</feature>
<feature type="turn" evidence="6">
    <location>
        <begin position="270"/>
        <end position="274"/>
    </location>
</feature>
<feature type="strand" evidence="6">
    <location>
        <begin position="276"/>
        <end position="281"/>
    </location>
</feature>
<feature type="strand" evidence="6">
    <location>
        <begin position="287"/>
        <end position="293"/>
    </location>
</feature>
<feature type="helix" evidence="6">
    <location>
        <begin position="295"/>
        <end position="311"/>
    </location>
</feature>
<feature type="helix" evidence="6">
    <location>
        <begin position="314"/>
        <end position="332"/>
    </location>
</feature>
<feature type="helix" evidence="6">
    <location>
        <begin position="339"/>
        <end position="351"/>
    </location>
</feature>
<feature type="helix" evidence="6">
    <location>
        <begin position="353"/>
        <end position="355"/>
    </location>
</feature>
<feature type="strand" evidence="6">
    <location>
        <begin position="358"/>
        <end position="364"/>
    </location>
</feature>
<feature type="strand" evidence="6">
    <location>
        <begin position="370"/>
        <end position="376"/>
    </location>
</feature>
<feature type="turn" evidence="6">
    <location>
        <begin position="384"/>
        <end position="386"/>
    </location>
</feature>
<feature type="helix" evidence="6">
    <location>
        <begin position="398"/>
        <end position="406"/>
    </location>
</feature>
<feature type="helix" evidence="6">
    <location>
        <begin position="409"/>
        <end position="424"/>
    </location>
</feature>
<feature type="strand" evidence="6">
    <location>
        <begin position="427"/>
        <end position="429"/>
    </location>
</feature>
<feature type="strand" evidence="6">
    <location>
        <begin position="433"/>
        <end position="436"/>
    </location>
</feature>
<proteinExistence type="evidence at protein level"/>
<name>ASSY_ECOLI</name>